<gene>
    <name evidence="1" type="primary">glyS</name>
    <name type="ordered locus">SPG_1402</name>
</gene>
<keyword id="KW-0030">Aminoacyl-tRNA synthetase</keyword>
<keyword id="KW-0067">ATP-binding</keyword>
<keyword id="KW-0963">Cytoplasm</keyword>
<keyword id="KW-0436">Ligase</keyword>
<keyword id="KW-0547">Nucleotide-binding</keyword>
<keyword id="KW-0648">Protein biosynthesis</keyword>
<comment type="catalytic activity">
    <reaction evidence="1">
        <text>tRNA(Gly) + glycine + ATP = glycyl-tRNA(Gly) + AMP + diphosphate</text>
        <dbReference type="Rhea" id="RHEA:16013"/>
        <dbReference type="Rhea" id="RHEA-COMP:9664"/>
        <dbReference type="Rhea" id="RHEA-COMP:9683"/>
        <dbReference type="ChEBI" id="CHEBI:30616"/>
        <dbReference type="ChEBI" id="CHEBI:33019"/>
        <dbReference type="ChEBI" id="CHEBI:57305"/>
        <dbReference type="ChEBI" id="CHEBI:78442"/>
        <dbReference type="ChEBI" id="CHEBI:78522"/>
        <dbReference type="ChEBI" id="CHEBI:456215"/>
        <dbReference type="EC" id="6.1.1.14"/>
    </reaction>
</comment>
<comment type="subunit">
    <text evidence="1">Tetramer of two alpha and two beta subunits.</text>
</comment>
<comment type="subcellular location">
    <subcellularLocation>
        <location evidence="1">Cytoplasm</location>
    </subcellularLocation>
</comment>
<comment type="similarity">
    <text evidence="1">Belongs to the class-II aminoacyl-tRNA synthetase family.</text>
</comment>
<protein>
    <recommendedName>
        <fullName evidence="1">Glycine--tRNA ligase beta subunit</fullName>
        <ecNumber evidence="1">6.1.1.14</ecNumber>
    </recommendedName>
    <alternativeName>
        <fullName evidence="1">Glycyl-tRNA synthetase beta subunit</fullName>
        <shortName evidence="1">GlyRS</shortName>
    </alternativeName>
</protein>
<name>SYGB_STRP4</name>
<sequence>MTKNLLVELGLEELPAYVVTPSEKQLGEKMAAFLKENRLSFEAIQTFSTPRRLAVRVTGLSDKQSDLTEDFKGPAKKIALDSDGNFTKAAQGFVRGKGLTVEDIEFREIKGEEYVYVTKEEVGQAVEAIVPGVVDVLKSLTFPVSMHWAGNSFEYIRPVHTLTVLLDEQEFDLDFLDIKGSRVSRGHRFLGKETKIQSALSYEEDLRKQFVIADPCEREQMIVDQIKEIEAKHGVRIEIDADLLNEVLNLVEYPTAFMGSFDAKYLEVPEEVLVTSMKEHQRYFVVRDQDGKLLPNFISVRNGNAERLKNVIKGNEKVLVARLEDGEFFWREDQKLVISDLVEKLNNVTFHEKIGSLREHMIRTGQITVLLAEKAGLSVDETVDLARAAAIYKFDLLTGMVGEFDELQGIMGEKYTLLAGETPAVAAAIREHYMPTSAEGELPESKVGAVLAIADKLDTILSFFSVGLIPSGSNDPYALRRATQGVVRILDAFGWHIAMDELIDSLYALKFDSLTYENKAEVMDFIKARVDKMMGSTPKDIKEAVLAGSNFVVADMLEAASALVEVSKEEDFKPSVESLSRAFNLAEKAEGVATVDSALFENDQEKALAEAVETLVLSGPASQQLKQLFALSPVIDAFFENTMVMAEDQAVRQNRLAILSQLTKKAAKFACFNQINTK</sequence>
<proteinExistence type="inferred from homology"/>
<feature type="chain" id="PRO_1000101349" description="Glycine--tRNA ligase beta subunit">
    <location>
        <begin position="1"/>
        <end position="678"/>
    </location>
</feature>
<dbReference type="EC" id="6.1.1.14" evidence="1"/>
<dbReference type="EMBL" id="CP001015">
    <property type="protein sequence ID" value="ACF56864.1"/>
    <property type="molecule type" value="Genomic_DNA"/>
</dbReference>
<dbReference type="SMR" id="B5E642"/>
<dbReference type="KEGG" id="spx:SPG_1402"/>
<dbReference type="HOGENOM" id="CLU_007220_2_2_9"/>
<dbReference type="GO" id="GO:0005829">
    <property type="term" value="C:cytosol"/>
    <property type="evidence" value="ECO:0007669"/>
    <property type="project" value="TreeGrafter"/>
</dbReference>
<dbReference type="GO" id="GO:0004814">
    <property type="term" value="F:arginine-tRNA ligase activity"/>
    <property type="evidence" value="ECO:0007669"/>
    <property type="project" value="InterPro"/>
</dbReference>
<dbReference type="GO" id="GO:0005524">
    <property type="term" value="F:ATP binding"/>
    <property type="evidence" value="ECO:0007669"/>
    <property type="project" value="UniProtKB-UniRule"/>
</dbReference>
<dbReference type="GO" id="GO:0004820">
    <property type="term" value="F:glycine-tRNA ligase activity"/>
    <property type="evidence" value="ECO:0007669"/>
    <property type="project" value="UniProtKB-UniRule"/>
</dbReference>
<dbReference type="GO" id="GO:0006420">
    <property type="term" value="P:arginyl-tRNA aminoacylation"/>
    <property type="evidence" value="ECO:0007669"/>
    <property type="project" value="InterPro"/>
</dbReference>
<dbReference type="GO" id="GO:0006426">
    <property type="term" value="P:glycyl-tRNA aminoacylation"/>
    <property type="evidence" value="ECO:0007669"/>
    <property type="project" value="UniProtKB-UniRule"/>
</dbReference>
<dbReference type="HAMAP" id="MF_00255">
    <property type="entry name" value="Gly_tRNA_synth_beta"/>
    <property type="match status" value="1"/>
</dbReference>
<dbReference type="InterPro" id="IPR008909">
    <property type="entry name" value="DALR_anticod-bd"/>
</dbReference>
<dbReference type="InterPro" id="IPR015944">
    <property type="entry name" value="Gly-tRNA-synth_bsu"/>
</dbReference>
<dbReference type="InterPro" id="IPR006194">
    <property type="entry name" value="Gly-tRNA-synth_heterodimer"/>
</dbReference>
<dbReference type="NCBIfam" id="TIGR00211">
    <property type="entry name" value="glyS"/>
    <property type="match status" value="1"/>
</dbReference>
<dbReference type="PANTHER" id="PTHR30075:SF2">
    <property type="entry name" value="GLYCINE--TRNA LIGASE, CHLOROPLASTIC_MITOCHONDRIAL 2"/>
    <property type="match status" value="1"/>
</dbReference>
<dbReference type="PANTHER" id="PTHR30075">
    <property type="entry name" value="GLYCYL-TRNA SYNTHETASE"/>
    <property type="match status" value="1"/>
</dbReference>
<dbReference type="Pfam" id="PF05746">
    <property type="entry name" value="DALR_1"/>
    <property type="match status" value="1"/>
</dbReference>
<dbReference type="Pfam" id="PF02092">
    <property type="entry name" value="tRNA_synt_2f"/>
    <property type="match status" value="1"/>
</dbReference>
<dbReference type="PRINTS" id="PR01045">
    <property type="entry name" value="TRNASYNTHGB"/>
</dbReference>
<dbReference type="SUPFAM" id="SSF109604">
    <property type="entry name" value="HD-domain/PDEase-like"/>
    <property type="match status" value="1"/>
</dbReference>
<dbReference type="PROSITE" id="PS50861">
    <property type="entry name" value="AA_TRNA_LIGASE_II_GLYAB"/>
    <property type="match status" value="1"/>
</dbReference>
<reference key="1">
    <citation type="journal article" date="2001" name="Microb. Drug Resist.">
        <title>Annotated draft genomic sequence from a Streptococcus pneumoniae type 19F clinical isolate.</title>
        <authorList>
            <person name="Dopazo J."/>
            <person name="Mendoza A."/>
            <person name="Herrero J."/>
            <person name="Caldara F."/>
            <person name="Humbert Y."/>
            <person name="Friedli L."/>
            <person name="Guerrier M."/>
            <person name="Grand-Schenk E."/>
            <person name="Gandin C."/>
            <person name="de Francesco M."/>
            <person name="Polissi A."/>
            <person name="Buell G."/>
            <person name="Feger G."/>
            <person name="Garcia E."/>
            <person name="Peitsch M."/>
            <person name="Garcia-Bustos J.F."/>
        </authorList>
    </citation>
    <scope>NUCLEOTIDE SEQUENCE [LARGE SCALE GENOMIC DNA]</scope>
    <source>
        <strain>G54</strain>
    </source>
</reference>
<reference key="2">
    <citation type="submission" date="2008-03" db="EMBL/GenBank/DDBJ databases">
        <title>Pneumococcal beta glucoside metabolism investigated by whole genome comparison.</title>
        <authorList>
            <person name="Mulas L."/>
            <person name="Trappetti C."/>
            <person name="Hakenbeck R."/>
            <person name="Iannelli F."/>
            <person name="Pozzi G."/>
            <person name="Davidsen T.M."/>
            <person name="Tettelin H."/>
            <person name="Oggioni M."/>
        </authorList>
    </citation>
    <scope>NUCLEOTIDE SEQUENCE [LARGE SCALE GENOMIC DNA]</scope>
    <source>
        <strain>G54</strain>
    </source>
</reference>
<organism>
    <name type="scientific">Streptococcus pneumoniae serotype 19F (strain G54)</name>
    <dbReference type="NCBI Taxonomy" id="512566"/>
    <lineage>
        <taxon>Bacteria</taxon>
        <taxon>Bacillati</taxon>
        <taxon>Bacillota</taxon>
        <taxon>Bacilli</taxon>
        <taxon>Lactobacillales</taxon>
        <taxon>Streptococcaceae</taxon>
        <taxon>Streptococcus</taxon>
    </lineage>
</organism>
<accession>B5E642</accession>
<evidence type="ECO:0000255" key="1">
    <source>
        <dbReference type="HAMAP-Rule" id="MF_00255"/>
    </source>
</evidence>